<feature type="chain" id="PRO_0000355806" description="Large ribosomal subunit protein uL14">
    <location>
        <begin position="1"/>
        <end position="122"/>
    </location>
</feature>
<reference key="1">
    <citation type="submission" date="2007-04" db="EMBL/GenBank/DDBJ databases">
        <title>Complete genome sequence of the nitrogen-fixing bacterium Azorhizobium caulinodans ORS571.</title>
        <authorList>
            <person name="Lee K.B."/>
            <person name="Backer P.D."/>
            <person name="Aono T."/>
            <person name="Liu C.T."/>
            <person name="Suzuki S."/>
            <person name="Suzuki T."/>
            <person name="Kaneko T."/>
            <person name="Yamada M."/>
            <person name="Tabata S."/>
            <person name="Kupfer D.M."/>
            <person name="Najar F.Z."/>
            <person name="Wiley G.B."/>
            <person name="Roe B."/>
            <person name="Binnewies T."/>
            <person name="Ussery D."/>
            <person name="Vereecke D."/>
            <person name="Gevers D."/>
            <person name="Holsters M."/>
            <person name="Oyaizu H."/>
        </authorList>
    </citation>
    <scope>NUCLEOTIDE SEQUENCE [LARGE SCALE GENOMIC DNA]</scope>
    <source>
        <strain>ATCC 43989 / DSM 5975 / JCM 20966 / LMG 6465 / NBRC 14845 / NCIMB 13405 / ORS 571</strain>
    </source>
</reference>
<protein>
    <recommendedName>
        <fullName evidence="1">Large ribosomal subunit protein uL14</fullName>
    </recommendedName>
    <alternativeName>
        <fullName evidence="2">50S ribosomal protein L14</fullName>
    </alternativeName>
</protein>
<dbReference type="EMBL" id="AP009384">
    <property type="protein sequence ID" value="BAF88542.1"/>
    <property type="status" value="ALT_INIT"/>
    <property type="molecule type" value="Genomic_DNA"/>
</dbReference>
<dbReference type="RefSeq" id="WP_018390610.1">
    <property type="nucleotide sequence ID" value="NC_009937.1"/>
</dbReference>
<dbReference type="SMR" id="A8IAQ6"/>
<dbReference type="STRING" id="438753.AZC_2544"/>
<dbReference type="KEGG" id="azc:AZC_2544"/>
<dbReference type="eggNOG" id="COG0093">
    <property type="taxonomic scope" value="Bacteria"/>
</dbReference>
<dbReference type="HOGENOM" id="CLU_095071_2_1_5"/>
<dbReference type="Proteomes" id="UP000000270">
    <property type="component" value="Chromosome"/>
</dbReference>
<dbReference type="GO" id="GO:0022625">
    <property type="term" value="C:cytosolic large ribosomal subunit"/>
    <property type="evidence" value="ECO:0007669"/>
    <property type="project" value="TreeGrafter"/>
</dbReference>
<dbReference type="GO" id="GO:0070180">
    <property type="term" value="F:large ribosomal subunit rRNA binding"/>
    <property type="evidence" value="ECO:0007669"/>
    <property type="project" value="TreeGrafter"/>
</dbReference>
<dbReference type="GO" id="GO:0003735">
    <property type="term" value="F:structural constituent of ribosome"/>
    <property type="evidence" value="ECO:0007669"/>
    <property type="project" value="InterPro"/>
</dbReference>
<dbReference type="GO" id="GO:0006412">
    <property type="term" value="P:translation"/>
    <property type="evidence" value="ECO:0007669"/>
    <property type="project" value="UniProtKB-UniRule"/>
</dbReference>
<dbReference type="CDD" id="cd00337">
    <property type="entry name" value="Ribosomal_uL14"/>
    <property type="match status" value="1"/>
</dbReference>
<dbReference type="FunFam" id="2.40.150.20:FF:000001">
    <property type="entry name" value="50S ribosomal protein L14"/>
    <property type="match status" value="1"/>
</dbReference>
<dbReference type="Gene3D" id="2.40.150.20">
    <property type="entry name" value="Ribosomal protein L14"/>
    <property type="match status" value="1"/>
</dbReference>
<dbReference type="HAMAP" id="MF_01367">
    <property type="entry name" value="Ribosomal_uL14"/>
    <property type="match status" value="1"/>
</dbReference>
<dbReference type="InterPro" id="IPR000218">
    <property type="entry name" value="Ribosomal_uL14"/>
</dbReference>
<dbReference type="InterPro" id="IPR005745">
    <property type="entry name" value="Ribosomal_uL14_bac-type"/>
</dbReference>
<dbReference type="InterPro" id="IPR019972">
    <property type="entry name" value="Ribosomal_uL14_CS"/>
</dbReference>
<dbReference type="InterPro" id="IPR036853">
    <property type="entry name" value="Ribosomal_uL14_sf"/>
</dbReference>
<dbReference type="NCBIfam" id="TIGR01067">
    <property type="entry name" value="rplN_bact"/>
    <property type="match status" value="1"/>
</dbReference>
<dbReference type="PANTHER" id="PTHR11761">
    <property type="entry name" value="50S/60S RIBOSOMAL PROTEIN L14/L23"/>
    <property type="match status" value="1"/>
</dbReference>
<dbReference type="PANTHER" id="PTHR11761:SF3">
    <property type="entry name" value="LARGE RIBOSOMAL SUBUNIT PROTEIN UL14M"/>
    <property type="match status" value="1"/>
</dbReference>
<dbReference type="Pfam" id="PF00238">
    <property type="entry name" value="Ribosomal_L14"/>
    <property type="match status" value="1"/>
</dbReference>
<dbReference type="SMART" id="SM01374">
    <property type="entry name" value="Ribosomal_L14"/>
    <property type="match status" value="1"/>
</dbReference>
<dbReference type="SUPFAM" id="SSF50193">
    <property type="entry name" value="Ribosomal protein L14"/>
    <property type="match status" value="1"/>
</dbReference>
<dbReference type="PROSITE" id="PS00049">
    <property type="entry name" value="RIBOSOMAL_L14"/>
    <property type="match status" value="1"/>
</dbReference>
<proteinExistence type="inferred from homology"/>
<name>RL14_AZOC5</name>
<gene>
    <name evidence="1" type="primary">rplN</name>
    <name type="ordered locus">AZC_2544</name>
</gene>
<comment type="function">
    <text evidence="1">Binds to 23S rRNA. Forms part of two intersubunit bridges in the 70S ribosome.</text>
</comment>
<comment type="subunit">
    <text evidence="1">Part of the 50S ribosomal subunit. Forms a cluster with proteins L3 and L19. In the 70S ribosome, L14 and L19 interact and together make contacts with the 16S rRNA in bridges B5 and B8.</text>
</comment>
<comment type="similarity">
    <text evidence="1">Belongs to the universal ribosomal protein uL14 family.</text>
</comment>
<comment type="sequence caution" evidence="2">
    <conflict type="erroneous initiation">
        <sequence resource="EMBL-CDS" id="BAF88542"/>
    </conflict>
</comment>
<sequence length="122" mass="13483">MIQMQTNLDVADNSGARRVMCIKVLGGSKRKYAHVGDIIVVSVKEAIPRGRVKKGDVMKAVVVRTAKDIRRVDGSVIRFDRNAAVLINNNKEPVGTRIFGPVPRELRAKNHMKIISLAPEVL</sequence>
<organism>
    <name type="scientific">Azorhizobium caulinodans (strain ATCC 43989 / DSM 5975 / JCM 20966 / LMG 6465 / NBRC 14845 / NCIMB 13405 / ORS 571)</name>
    <dbReference type="NCBI Taxonomy" id="438753"/>
    <lineage>
        <taxon>Bacteria</taxon>
        <taxon>Pseudomonadati</taxon>
        <taxon>Pseudomonadota</taxon>
        <taxon>Alphaproteobacteria</taxon>
        <taxon>Hyphomicrobiales</taxon>
        <taxon>Xanthobacteraceae</taxon>
        <taxon>Azorhizobium</taxon>
    </lineage>
</organism>
<keyword id="KW-1185">Reference proteome</keyword>
<keyword id="KW-0687">Ribonucleoprotein</keyword>
<keyword id="KW-0689">Ribosomal protein</keyword>
<keyword id="KW-0694">RNA-binding</keyword>
<keyword id="KW-0699">rRNA-binding</keyword>
<accession>A8IAQ6</accession>
<evidence type="ECO:0000255" key="1">
    <source>
        <dbReference type="HAMAP-Rule" id="MF_01367"/>
    </source>
</evidence>
<evidence type="ECO:0000305" key="2"/>